<comment type="function">
    <text evidence="1">Orphan nuclear receptor.</text>
</comment>
<comment type="subcellular location">
    <subcellularLocation>
        <location evidence="3">Nucleus</location>
    </subcellularLocation>
</comment>
<comment type="similarity">
    <text evidence="2">Belongs to the nuclear hormone receptor family.</text>
</comment>
<gene>
    <name evidence="1" type="primary">nhr-28</name>
    <name type="ORF">CBG16375</name>
</gene>
<feature type="chain" id="PRO_0000328978" description="Nuclear hormone receptor family member nhr-28">
    <location>
        <begin position="1"/>
        <end position="435"/>
    </location>
</feature>
<feature type="domain" description="NR LBD" evidence="4">
    <location>
        <begin position="113"/>
        <end position="374"/>
    </location>
</feature>
<feature type="DNA-binding region" description="Nuclear receptor" evidence="3">
    <location>
        <begin position="5"/>
        <end position="80"/>
    </location>
</feature>
<feature type="zinc finger region" description="NR C4-type" evidence="3">
    <location>
        <begin position="8"/>
        <end position="28"/>
    </location>
</feature>
<feature type="zinc finger region" description="NR C4-type" evidence="3">
    <location>
        <begin position="44"/>
        <end position="63"/>
    </location>
</feature>
<feature type="region of interest" description="Disordered" evidence="5">
    <location>
        <begin position="84"/>
        <end position="106"/>
    </location>
</feature>
<feature type="compositionally biased region" description="Polar residues" evidence="5">
    <location>
        <begin position="91"/>
        <end position="104"/>
    </location>
</feature>
<name>NHR28_CAEBR</name>
<accession>A8XNK6</accession>
<protein>
    <recommendedName>
        <fullName>Nuclear hormone receptor family member nhr-28</fullName>
    </recommendedName>
</protein>
<organism>
    <name type="scientific">Caenorhabditis briggsae</name>
    <dbReference type="NCBI Taxonomy" id="6238"/>
    <lineage>
        <taxon>Eukaryota</taxon>
        <taxon>Metazoa</taxon>
        <taxon>Ecdysozoa</taxon>
        <taxon>Nematoda</taxon>
        <taxon>Chromadorea</taxon>
        <taxon>Rhabditida</taxon>
        <taxon>Rhabditina</taxon>
        <taxon>Rhabditomorpha</taxon>
        <taxon>Rhabditoidea</taxon>
        <taxon>Rhabditidae</taxon>
        <taxon>Peloderinae</taxon>
        <taxon>Caenorhabditis</taxon>
    </lineage>
</organism>
<dbReference type="EMBL" id="HE600961">
    <property type="protein sequence ID" value="CAP34095.1"/>
    <property type="molecule type" value="Genomic_DNA"/>
</dbReference>
<dbReference type="SMR" id="A8XNK6"/>
<dbReference type="FunCoup" id="A8XNK6">
    <property type="interactions" value="19"/>
</dbReference>
<dbReference type="STRING" id="6238.A8XNK6"/>
<dbReference type="EnsemblMetazoa" id="CBG16375.1">
    <property type="protein sequence ID" value="CBG16375.1"/>
    <property type="gene ID" value="WBGene00036331"/>
</dbReference>
<dbReference type="KEGG" id="cbr:CBG_16375"/>
<dbReference type="CTD" id="8585626"/>
<dbReference type="WormBase" id="CBG16375">
    <property type="protein sequence ID" value="CBP03904"/>
    <property type="gene ID" value="WBGene00036331"/>
    <property type="gene designation" value="Cbr-nhr-28"/>
</dbReference>
<dbReference type="eggNOG" id="KOG3575">
    <property type="taxonomic scope" value="Eukaryota"/>
</dbReference>
<dbReference type="HOGENOM" id="CLU_007368_1_1_1"/>
<dbReference type="InParanoid" id="A8XNK6"/>
<dbReference type="OMA" id="KNVRCMC"/>
<dbReference type="OrthoDB" id="5830034at2759"/>
<dbReference type="Proteomes" id="UP000008549">
    <property type="component" value="Unassembled WGS sequence"/>
</dbReference>
<dbReference type="GO" id="GO:0005634">
    <property type="term" value="C:nucleus"/>
    <property type="evidence" value="ECO:0000318"/>
    <property type="project" value="GO_Central"/>
</dbReference>
<dbReference type="GO" id="GO:0003700">
    <property type="term" value="F:DNA-binding transcription factor activity"/>
    <property type="evidence" value="ECO:0000318"/>
    <property type="project" value="GO_Central"/>
</dbReference>
<dbReference type="GO" id="GO:0000978">
    <property type="term" value="F:RNA polymerase II cis-regulatory region sequence-specific DNA binding"/>
    <property type="evidence" value="ECO:0007669"/>
    <property type="project" value="InterPro"/>
</dbReference>
<dbReference type="GO" id="GO:0008270">
    <property type="term" value="F:zinc ion binding"/>
    <property type="evidence" value="ECO:0007669"/>
    <property type="project" value="UniProtKB-KW"/>
</dbReference>
<dbReference type="GO" id="GO:0006357">
    <property type="term" value="P:regulation of transcription by RNA polymerase II"/>
    <property type="evidence" value="ECO:0000318"/>
    <property type="project" value="GO_Central"/>
</dbReference>
<dbReference type="CDD" id="cd06960">
    <property type="entry name" value="NR_DBD_HNF4A"/>
    <property type="match status" value="1"/>
</dbReference>
<dbReference type="CDD" id="cd06157">
    <property type="entry name" value="NR_LBD"/>
    <property type="match status" value="1"/>
</dbReference>
<dbReference type="Gene3D" id="3.30.50.10">
    <property type="entry name" value="Erythroid Transcription Factor GATA-1, subunit A"/>
    <property type="match status" value="1"/>
</dbReference>
<dbReference type="Gene3D" id="1.10.565.10">
    <property type="entry name" value="Retinoid X Receptor"/>
    <property type="match status" value="1"/>
</dbReference>
<dbReference type="InterPro" id="IPR049636">
    <property type="entry name" value="HNF4-like_DBD"/>
</dbReference>
<dbReference type="InterPro" id="IPR035500">
    <property type="entry name" value="NHR-like_dom_sf"/>
</dbReference>
<dbReference type="InterPro" id="IPR000536">
    <property type="entry name" value="Nucl_hrmn_rcpt_lig-bd"/>
</dbReference>
<dbReference type="InterPro" id="IPR001628">
    <property type="entry name" value="Znf_hrmn_rcpt"/>
</dbReference>
<dbReference type="InterPro" id="IPR013088">
    <property type="entry name" value="Znf_NHR/GATA"/>
</dbReference>
<dbReference type="PANTHER" id="PTHR46011:SF2">
    <property type="entry name" value="NUCLEAR HORMONE RECEPTOR FAMILY MEMBER NHR-28"/>
    <property type="match status" value="1"/>
</dbReference>
<dbReference type="PANTHER" id="PTHR46011">
    <property type="entry name" value="NUCLEAR HORMONE RECEPTOR FAMILY MEMBER NHR-86-RELATED"/>
    <property type="match status" value="1"/>
</dbReference>
<dbReference type="Pfam" id="PF00104">
    <property type="entry name" value="Hormone_recep"/>
    <property type="match status" value="1"/>
</dbReference>
<dbReference type="Pfam" id="PF00105">
    <property type="entry name" value="zf-C4"/>
    <property type="match status" value="1"/>
</dbReference>
<dbReference type="PRINTS" id="PR00047">
    <property type="entry name" value="STROIDFINGER"/>
</dbReference>
<dbReference type="SMART" id="SM00430">
    <property type="entry name" value="HOLI"/>
    <property type="match status" value="1"/>
</dbReference>
<dbReference type="SMART" id="SM00399">
    <property type="entry name" value="ZnF_C4"/>
    <property type="match status" value="1"/>
</dbReference>
<dbReference type="SUPFAM" id="SSF57716">
    <property type="entry name" value="Glucocorticoid receptor-like (DNA-binding domain)"/>
    <property type="match status" value="1"/>
</dbReference>
<dbReference type="SUPFAM" id="SSF48508">
    <property type="entry name" value="Nuclear receptor ligand-binding domain"/>
    <property type="match status" value="1"/>
</dbReference>
<dbReference type="PROSITE" id="PS51843">
    <property type="entry name" value="NR_LBD"/>
    <property type="match status" value="1"/>
</dbReference>
<dbReference type="PROSITE" id="PS00031">
    <property type="entry name" value="NUCLEAR_REC_DBD_1"/>
    <property type="match status" value="1"/>
</dbReference>
<dbReference type="PROSITE" id="PS51030">
    <property type="entry name" value="NUCLEAR_REC_DBD_2"/>
    <property type="match status" value="1"/>
</dbReference>
<sequence>MIIGKKPCSVCGEAGDGAHFGAEACRACAAFFRRSVALNKAYVCRAMGACIIQKNVRCMCRACRFSKCMSVGMRKSAVQRHRELFGRQDSSDGSNPRVSPSTSWPMDVSPVNIEEPGMATLNCLNENYTHMSNVRRVIHNTGSGNIFNPREPKAVAYTDAHSVHLKEIGLVADWIIKSYPDFQKVHQEQKKLLYRNFFLPFMILECGYHCCLNDRTDILFLPSGDFIDCSRPETFYGSHINSHLMSPEEAIRMFVPSFEIYRRNVLDPMRREKVDNYEFFTLCSLVLWDHGLEGQIDECVNMARHNRERILREILYYYRRVKQIPDPSMRLANLLVLLPALQRSVRRFQEDVEITHVFNVYSVEETFYELVSGRLSDGFFQKATQLDATPEEMKEIKKEVECVWDLNTSQVVDLYDLPPTSFLTPTSSTPSSTEM</sequence>
<proteinExistence type="inferred from homology"/>
<evidence type="ECO:0000250" key="1">
    <source>
        <dbReference type="UniProtKB" id="Q17905"/>
    </source>
</evidence>
<evidence type="ECO:0000255" key="2"/>
<evidence type="ECO:0000255" key="3">
    <source>
        <dbReference type="PROSITE-ProRule" id="PRU00407"/>
    </source>
</evidence>
<evidence type="ECO:0000255" key="4">
    <source>
        <dbReference type="PROSITE-ProRule" id="PRU01189"/>
    </source>
</evidence>
<evidence type="ECO:0000256" key="5">
    <source>
        <dbReference type="SAM" id="MobiDB-lite"/>
    </source>
</evidence>
<evidence type="ECO:0000312" key="6">
    <source>
        <dbReference type="EMBL" id="CAP34095.1"/>
    </source>
</evidence>
<reference evidence="6" key="1">
    <citation type="journal article" date="2003" name="PLoS Biol.">
        <title>The genome sequence of Caenorhabditis briggsae: a platform for comparative genomics.</title>
        <authorList>
            <person name="Stein L.D."/>
            <person name="Bao Z."/>
            <person name="Blasiar D."/>
            <person name="Blumenthal T."/>
            <person name="Brent M.R."/>
            <person name="Chen N."/>
            <person name="Chinwalla A."/>
            <person name="Clarke L."/>
            <person name="Clee C."/>
            <person name="Coghlan A."/>
            <person name="Coulson A."/>
            <person name="D'Eustachio P."/>
            <person name="Fitch D.H.A."/>
            <person name="Fulton L.A."/>
            <person name="Fulton R.E."/>
            <person name="Griffiths-Jones S."/>
            <person name="Harris T.W."/>
            <person name="Hillier L.W."/>
            <person name="Kamath R."/>
            <person name="Kuwabara P.E."/>
            <person name="Mardis E.R."/>
            <person name="Marra M.A."/>
            <person name="Miner T.L."/>
            <person name="Minx P."/>
            <person name="Mullikin J.C."/>
            <person name="Plumb R.W."/>
            <person name="Rogers J."/>
            <person name="Schein J.E."/>
            <person name="Sohrmann M."/>
            <person name="Spieth J."/>
            <person name="Stajich J.E."/>
            <person name="Wei C."/>
            <person name="Willey D."/>
            <person name="Wilson R.K."/>
            <person name="Durbin R.M."/>
            <person name="Waterston R.H."/>
        </authorList>
    </citation>
    <scope>NUCLEOTIDE SEQUENCE [LARGE SCALE GENOMIC DNA]</scope>
    <source>
        <strain evidence="6">AF16</strain>
    </source>
</reference>
<keyword id="KW-0238">DNA-binding</keyword>
<keyword id="KW-0479">Metal-binding</keyword>
<keyword id="KW-0539">Nucleus</keyword>
<keyword id="KW-0675">Receptor</keyword>
<keyword id="KW-1185">Reference proteome</keyword>
<keyword id="KW-0804">Transcription</keyword>
<keyword id="KW-0805">Transcription regulation</keyword>
<keyword id="KW-0862">Zinc</keyword>
<keyword id="KW-0863">Zinc-finger</keyword>